<proteinExistence type="inferred from homology"/>
<sequence length="494" mass="55288">MKTIAFDSNKYLNLQRDHILERISQFDGKLYMEFGGKMLEDYHAARVLPGYEPDNKIKLLKELKEQVEIVIAINANNIEHSKARGDLGISYDQEVFRLIDKFNTLDIYVGSVVITQYNNQPAADAFRKQLEKNGIASYLHYPIKGYPTDINHIISSEGMGKNDYIKTSRNLIVVTAPGPGSGKLATCMSQMYHDQINGVKSGYAKFETFPVWNLPLHHPVNLAYEAATADLDDVNMIDPFHLETYGKTAVNYNRDIEVFPVLNRTFERILSKSPYASPTDMGVNMVGFSIVNEEAAIEASKQEIIRRYYQTLVDFKAERVTESAVKKIELLMNDIGVTPDDRHVTVAAHQKAEQTGQPALALQLPNGQIVTGKTSGLFGPTAAVIINAIKTLAKIDKTTHLIEPEYVKPIQGLKVNHLGSHNPRLHSNEILIALAITAMTSEEANLAMKELGNLKGSEAHSTVILTEEDKNVLRKLGVNITFDPVYQHHKLYRK</sequence>
<feature type="chain" id="PRO_0000411650" description="UPF0371 protein SPs0839">
    <location>
        <begin position="1"/>
        <end position="494"/>
    </location>
</feature>
<evidence type="ECO:0000255" key="1">
    <source>
        <dbReference type="HAMAP-Rule" id="MF_01567"/>
    </source>
</evidence>
<evidence type="ECO:0000305" key="2"/>
<accession>P0DH21</accession>
<accession>Q878W0</accession>
<accession>Q8K724</accession>
<comment type="similarity">
    <text evidence="1">Belongs to the UPF0371 family.</text>
</comment>
<comment type="sequence caution" evidence="2">
    <conflict type="erroneous initiation">
        <sequence resource="EMBL-CDS" id="BAC63934"/>
    </conflict>
</comment>
<gene>
    <name type="ordered locus">SPs0839</name>
</gene>
<protein>
    <recommendedName>
        <fullName evidence="1">UPF0371 protein SPs0839</fullName>
    </recommendedName>
</protein>
<name>Y1021_STRPQ</name>
<reference key="1">
    <citation type="journal article" date="2003" name="Genome Res.">
        <title>Genome sequence of an M3 strain of Streptococcus pyogenes reveals a large-scale genomic rearrangement in invasive strains and new insights into phage evolution.</title>
        <authorList>
            <person name="Nakagawa I."/>
            <person name="Kurokawa K."/>
            <person name="Yamashita A."/>
            <person name="Nakata M."/>
            <person name="Tomiyasu Y."/>
            <person name="Okahashi N."/>
            <person name="Kawabata S."/>
            <person name="Yamazaki K."/>
            <person name="Shiba T."/>
            <person name="Yasunaga T."/>
            <person name="Hayashi H."/>
            <person name="Hattori M."/>
            <person name="Hamada S."/>
        </authorList>
    </citation>
    <scope>NUCLEOTIDE SEQUENCE [LARGE SCALE GENOMIC DNA]</scope>
    <source>
        <strain>SSI-1</strain>
    </source>
</reference>
<organism>
    <name type="scientific">Streptococcus pyogenes serotype M3 (strain SSI-1)</name>
    <dbReference type="NCBI Taxonomy" id="193567"/>
    <lineage>
        <taxon>Bacteria</taxon>
        <taxon>Bacillati</taxon>
        <taxon>Bacillota</taxon>
        <taxon>Bacilli</taxon>
        <taxon>Lactobacillales</taxon>
        <taxon>Streptococcaceae</taxon>
        <taxon>Streptococcus</taxon>
    </lineage>
</organism>
<dbReference type="EMBL" id="BA000034">
    <property type="protein sequence ID" value="BAC63934.1"/>
    <property type="status" value="ALT_INIT"/>
    <property type="molecule type" value="Genomic_DNA"/>
</dbReference>
<dbReference type="RefSeq" id="WP_011054624.1">
    <property type="nucleotide sequence ID" value="NC_004606.1"/>
</dbReference>
<dbReference type="SMR" id="P0DH21"/>
<dbReference type="KEGG" id="sps:SPs0839"/>
<dbReference type="HOGENOM" id="CLU_046981_0_0_9"/>
<dbReference type="Gene3D" id="1.20.1570.10">
    <property type="entry name" value="dip2346 domain like"/>
    <property type="match status" value="1"/>
</dbReference>
<dbReference type="Gene3D" id="3.10.630.10">
    <property type="entry name" value="dip2346 domain like"/>
    <property type="match status" value="1"/>
</dbReference>
<dbReference type="Gene3D" id="3.40.140.40">
    <property type="entry name" value="Domain of unknown function (DUF1846), C-terminal subdomain"/>
    <property type="match status" value="1"/>
</dbReference>
<dbReference type="HAMAP" id="MF_01567">
    <property type="entry name" value="UPF0371"/>
    <property type="match status" value="1"/>
</dbReference>
<dbReference type="InterPro" id="IPR014999">
    <property type="entry name" value="DUF1846"/>
</dbReference>
<dbReference type="InterPro" id="IPR048441">
    <property type="entry name" value="DUF1846_C"/>
</dbReference>
<dbReference type="InterPro" id="IPR048496">
    <property type="entry name" value="DUF1846_N"/>
</dbReference>
<dbReference type="NCBIfam" id="NF010184">
    <property type="entry name" value="PRK13663.1"/>
    <property type="match status" value="1"/>
</dbReference>
<dbReference type="Pfam" id="PF08903">
    <property type="entry name" value="DUF1846"/>
    <property type="match status" value="1"/>
</dbReference>
<dbReference type="Pfam" id="PF20921">
    <property type="entry name" value="DUF1846_C"/>
    <property type="match status" value="1"/>
</dbReference>
<dbReference type="PIRSF" id="PIRSF033132">
    <property type="entry name" value="DUF1846"/>
    <property type="match status" value="1"/>
</dbReference>